<reference key="1">
    <citation type="journal article" date="2011" name="Stand. Genomic Sci.">
        <title>Complete genome sequence of Rhodospirillum rubrum type strain (S1).</title>
        <authorList>
            <person name="Munk A.C."/>
            <person name="Copeland A."/>
            <person name="Lucas S."/>
            <person name="Lapidus A."/>
            <person name="Del Rio T.G."/>
            <person name="Barry K."/>
            <person name="Detter J.C."/>
            <person name="Hammon N."/>
            <person name="Israni S."/>
            <person name="Pitluck S."/>
            <person name="Brettin T."/>
            <person name="Bruce D."/>
            <person name="Han C."/>
            <person name="Tapia R."/>
            <person name="Gilna P."/>
            <person name="Schmutz J."/>
            <person name="Larimer F."/>
            <person name="Land M."/>
            <person name="Kyrpides N.C."/>
            <person name="Mavromatis K."/>
            <person name="Richardson P."/>
            <person name="Rohde M."/>
            <person name="Goeker M."/>
            <person name="Klenk H.P."/>
            <person name="Zhang Y."/>
            <person name="Roberts G.P."/>
            <person name="Reslewic S."/>
            <person name="Schwartz D.C."/>
        </authorList>
    </citation>
    <scope>NUCLEOTIDE SEQUENCE [LARGE SCALE GENOMIC DNA]</scope>
    <source>
        <strain>ATCC 11170 / ATH 1.1.1 / DSM 467 / LMG 4362 / NCIMB 8255 / S1</strain>
    </source>
</reference>
<name>RL14_RHORT</name>
<organism>
    <name type="scientific">Rhodospirillum rubrum (strain ATCC 11170 / ATH 1.1.1 / DSM 467 / LMG 4362 / NCIMB 8255 / S1)</name>
    <dbReference type="NCBI Taxonomy" id="269796"/>
    <lineage>
        <taxon>Bacteria</taxon>
        <taxon>Pseudomonadati</taxon>
        <taxon>Pseudomonadota</taxon>
        <taxon>Alphaproteobacteria</taxon>
        <taxon>Rhodospirillales</taxon>
        <taxon>Rhodospirillaceae</taxon>
        <taxon>Rhodospirillum</taxon>
    </lineage>
</organism>
<evidence type="ECO:0000255" key="1">
    <source>
        <dbReference type="HAMAP-Rule" id="MF_01367"/>
    </source>
</evidence>
<evidence type="ECO:0000305" key="2"/>
<sequence length="122" mass="13511">MIQMQTRLDVADNSGARQVQCIKVLGGSKRMIAGVGDIIVVSVKEAIPRGRVKKGDVHRAVIVRTAKEIRRPDGTSIRFDRNAAVLLNKQNEPIGTRIFGPVVRELRARKFMKIISLAPEVL</sequence>
<proteinExistence type="inferred from homology"/>
<keyword id="KW-1185">Reference proteome</keyword>
<keyword id="KW-0687">Ribonucleoprotein</keyword>
<keyword id="KW-0689">Ribosomal protein</keyword>
<keyword id="KW-0694">RNA-binding</keyword>
<keyword id="KW-0699">rRNA-binding</keyword>
<accession>Q2RQX0</accession>
<gene>
    <name evidence="1" type="primary">rplN</name>
    <name type="ordered locus">Rru_A2678</name>
</gene>
<dbReference type="EMBL" id="CP000230">
    <property type="protein sequence ID" value="ABC23475.1"/>
    <property type="molecule type" value="Genomic_DNA"/>
</dbReference>
<dbReference type="RefSeq" id="WP_011390428.1">
    <property type="nucleotide sequence ID" value="NC_007643.1"/>
</dbReference>
<dbReference type="RefSeq" id="YP_427762.1">
    <property type="nucleotide sequence ID" value="NC_007643.1"/>
</dbReference>
<dbReference type="SMR" id="Q2RQX0"/>
<dbReference type="STRING" id="269796.Rru_A2678"/>
<dbReference type="EnsemblBacteria" id="ABC23475">
    <property type="protein sequence ID" value="ABC23475"/>
    <property type="gene ID" value="Rru_A2678"/>
</dbReference>
<dbReference type="KEGG" id="rru:Rru_A2678"/>
<dbReference type="PATRIC" id="fig|269796.9.peg.2785"/>
<dbReference type="eggNOG" id="COG0093">
    <property type="taxonomic scope" value="Bacteria"/>
</dbReference>
<dbReference type="HOGENOM" id="CLU_095071_2_1_5"/>
<dbReference type="PhylomeDB" id="Q2RQX0"/>
<dbReference type="Proteomes" id="UP000001929">
    <property type="component" value="Chromosome"/>
</dbReference>
<dbReference type="GO" id="GO:0022625">
    <property type="term" value="C:cytosolic large ribosomal subunit"/>
    <property type="evidence" value="ECO:0007669"/>
    <property type="project" value="TreeGrafter"/>
</dbReference>
<dbReference type="GO" id="GO:0070180">
    <property type="term" value="F:large ribosomal subunit rRNA binding"/>
    <property type="evidence" value="ECO:0007669"/>
    <property type="project" value="TreeGrafter"/>
</dbReference>
<dbReference type="GO" id="GO:0003735">
    <property type="term" value="F:structural constituent of ribosome"/>
    <property type="evidence" value="ECO:0007669"/>
    <property type="project" value="InterPro"/>
</dbReference>
<dbReference type="GO" id="GO:0006412">
    <property type="term" value="P:translation"/>
    <property type="evidence" value="ECO:0007669"/>
    <property type="project" value="UniProtKB-UniRule"/>
</dbReference>
<dbReference type="CDD" id="cd00337">
    <property type="entry name" value="Ribosomal_uL14"/>
    <property type="match status" value="1"/>
</dbReference>
<dbReference type="FunFam" id="2.40.150.20:FF:000001">
    <property type="entry name" value="50S ribosomal protein L14"/>
    <property type="match status" value="1"/>
</dbReference>
<dbReference type="Gene3D" id="2.40.150.20">
    <property type="entry name" value="Ribosomal protein L14"/>
    <property type="match status" value="1"/>
</dbReference>
<dbReference type="HAMAP" id="MF_01367">
    <property type="entry name" value="Ribosomal_uL14"/>
    <property type="match status" value="1"/>
</dbReference>
<dbReference type="InterPro" id="IPR000218">
    <property type="entry name" value="Ribosomal_uL14"/>
</dbReference>
<dbReference type="InterPro" id="IPR005745">
    <property type="entry name" value="Ribosomal_uL14_bac-type"/>
</dbReference>
<dbReference type="InterPro" id="IPR019972">
    <property type="entry name" value="Ribosomal_uL14_CS"/>
</dbReference>
<dbReference type="InterPro" id="IPR036853">
    <property type="entry name" value="Ribosomal_uL14_sf"/>
</dbReference>
<dbReference type="NCBIfam" id="TIGR01067">
    <property type="entry name" value="rplN_bact"/>
    <property type="match status" value="1"/>
</dbReference>
<dbReference type="PANTHER" id="PTHR11761">
    <property type="entry name" value="50S/60S RIBOSOMAL PROTEIN L14/L23"/>
    <property type="match status" value="1"/>
</dbReference>
<dbReference type="PANTHER" id="PTHR11761:SF3">
    <property type="entry name" value="LARGE RIBOSOMAL SUBUNIT PROTEIN UL14M"/>
    <property type="match status" value="1"/>
</dbReference>
<dbReference type="Pfam" id="PF00238">
    <property type="entry name" value="Ribosomal_L14"/>
    <property type="match status" value="1"/>
</dbReference>
<dbReference type="SMART" id="SM01374">
    <property type="entry name" value="Ribosomal_L14"/>
    <property type="match status" value="1"/>
</dbReference>
<dbReference type="SUPFAM" id="SSF50193">
    <property type="entry name" value="Ribosomal protein L14"/>
    <property type="match status" value="1"/>
</dbReference>
<dbReference type="PROSITE" id="PS00049">
    <property type="entry name" value="RIBOSOMAL_L14"/>
    <property type="match status" value="1"/>
</dbReference>
<feature type="chain" id="PRO_0000266547" description="Large ribosomal subunit protein uL14">
    <location>
        <begin position="1"/>
        <end position="122"/>
    </location>
</feature>
<comment type="function">
    <text evidence="1">Binds to 23S rRNA. Forms part of two intersubunit bridges in the 70S ribosome.</text>
</comment>
<comment type="subunit">
    <text evidence="1">Part of the 50S ribosomal subunit. Forms a cluster with proteins L3 and L19. In the 70S ribosome, L14 and L19 interact and together make contacts with the 16S rRNA in bridges B5 and B8.</text>
</comment>
<comment type="similarity">
    <text evidence="1">Belongs to the universal ribosomal protein uL14 family.</text>
</comment>
<protein>
    <recommendedName>
        <fullName evidence="1">Large ribosomal subunit protein uL14</fullName>
    </recommendedName>
    <alternativeName>
        <fullName evidence="2">50S ribosomal protein L14</fullName>
    </alternativeName>
</protein>